<organism>
    <name type="scientific">Bacteroides thetaiotaomicron (strain ATCC 29148 / DSM 2079 / JCM 5827 / CCUG 10774 / NCTC 10582 / VPI-5482 / E50)</name>
    <dbReference type="NCBI Taxonomy" id="226186"/>
    <lineage>
        <taxon>Bacteria</taxon>
        <taxon>Pseudomonadati</taxon>
        <taxon>Bacteroidota</taxon>
        <taxon>Bacteroidia</taxon>
        <taxon>Bacteroidales</taxon>
        <taxon>Bacteroidaceae</taxon>
        <taxon>Bacteroides</taxon>
    </lineage>
</organism>
<gene>
    <name evidence="1" type="primary">clpP</name>
    <name type="ordered locus">BT_3842</name>
</gene>
<evidence type="ECO:0000255" key="1">
    <source>
        <dbReference type="HAMAP-Rule" id="MF_00444"/>
    </source>
</evidence>
<reference key="1">
    <citation type="journal article" date="2003" name="Science">
        <title>A genomic view of the human-Bacteroides thetaiotaomicron symbiosis.</title>
        <authorList>
            <person name="Xu J."/>
            <person name="Bjursell M.K."/>
            <person name="Himrod J."/>
            <person name="Deng S."/>
            <person name="Carmichael L.K."/>
            <person name="Chiang H.C."/>
            <person name="Hooper L.V."/>
            <person name="Gordon J.I."/>
        </authorList>
    </citation>
    <scope>NUCLEOTIDE SEQUENCE [LARGE SCALE GENOMIC DNA]</scope>
    <source>
        <strain>ATCC 29148 / DSM 2079 / JCM 5827 / CCUG 10774 / NCTC 10582 / VPI-5482 / E50</strain>
    </source>
</reference>
<proteinExistence type="inferred from homology"/>
<comment type="function">
    <text evidence="1">Cleaves peptides in various proteins in a process that requires ATP hydrolysis. Has a chymotrypsin-like activity. Plays a major role in the degradation of misfolded proteins.</text>
</comment>
<comment type="catalytic activity">
    <reaction evidence="1">
        <text>Hydrolysis of proteins to small peptides in the presence of ATP and magnesium. alpha-casein is the usual test substrate. In the absence of ATP, only oligopeptides shorter than five residues are hydrolyzed (such as succinyl-Leu-Tyr-|-NHMec, and Leu-Tyr-Leu-|-Tyr-Trp, in which cleavage of the -Tyr-|-Leu- and -Tyr-|-Trp bonds also occurs).</text>
        <dbReference type="EC" id="3.4.21.92"/>
    </reaction>
</comment>
<comment type="subunit">
    <text evidence="1">Fourteen ClpP subunits assemble into 2 heptameric rings which stack back to back to give a disk-like structure with a central cavity, resembling the structure of eukaryotic proteasomes.</text>
</comment>
<comment type="subcellular location">
    <subcellularLocation>
        <location evidence="1">Cytoplasm</location>
    </subcellularLocation>
</comment>
<comment type="similarity">
    <text evidence="1">Belongs to the peptidase S14 family.</text>
</comment>
<sequence>MDDFRKYATKHLGMNGMVLDDVIKSQAGYLNPYILEERQLNVTQLDVFSRLMMDRIIFLGTQVDDYTANTLQAQLLYLDSVDPGKDISIYINSPGGSVYAGLGIYDTMQFISSDVATICTGMAASMAAVLLVAGAEGKRSALPHSRVMIHQPMGGAQGQASDIEITAREIQKLKKELYTIIADHSHTDFDKVWADSDRDYWMTAQEAKEYGMIDEVLIKK</sequence>
<feature type="chain" id="PRO_0000179502" description="ATP-dependent Clp protease proteolytic subunit">
    <location>
        <begin position="1"/>
        <end position="220"/>
    </location>
</feature>
<feature type="active site" description="Nucleophile" evidence="1">
    <location>
        <position position="125"/>
    </location>
</feature>
<feature type="active site" evidence="1">
    <location>
        <position position="150"/>
    </location>
</feature>
<keyword id="KW-0963">Cytoplasm</keyword>
<keyword id="KW-0378">Hydrolase</keyword>
<keyword id="KW-0645">Protease</keyword>
<keyword id="KW-1185">Reference proteome</keyword>
<keyword id="KW-0720">Serine protease</keyword>
<dbReference type="EC" id="3.4.21.92" evidence="1"/>
<dbReference type="EMBL" id="AE015928">
    <property type="protein sequence ID" value="AAO78947.1"/>
    <property type="molecule type" value="Genomic_DNA"/>
</dbReference>
<dbReference type="RefSeq" id="NP_812753.1">
    <property type="nucleotide sequence ID" value="NC_004663.1"/>
</dbReference>
<dbReference type="RefSeq" id="WP_004297164.1">
    <property type="nucleotide sequence ID" value="NZ_UYXG01000011.1"/>
</dbReference>
<dbReference type="SMR" id="Q8A129"/>
<dbReference type="FunCoup" id="Q8A129">
    <property type="interactions" value="457"/>
</dbReference>
<dbReference type="STRING" id="226186.BT_3842"/>
<dbReference type="MEROPS" id="S14.001"/>
<dbReference type="PaxDb" id="226186-BT_3842"/>
<dbReference type="EnsemblBacteria" id="AAO78947">
    <property type="protein sequence ID" value="AAO78947"/>
    <property type="gene ID" value="BT_3842"/>
</dbReference>
<dbReference type="GeneID" id="92989590"/>
<dbReference type="KEGG" id="bth:BT_3842"/>
<dbReference type="PATRIC" id="fig|226186.12.peg.3906"/>
<dbReference type="eggNOG" id="COG0740">
    <property type="taxonomic scope" value="Bacteria"/>
</dbReference>
<dbReference type="HOGENOM" id="CLU_058707_3_1_10"/>
<dbReference type="InParanoid" id="Q8A129"/>
<dbReference type="OrthoDB" id="9802800at2"/>
<dbReference type="Proteomes" id="UP000001414">
    <property type="component" value="Chromosome"/>
</dbReference>
<dbReference type="GO" id="GO:0005737">
    <property type="term" value="C:cytoplasm"/>
    <property type="evidence" value="ECO:0007669"/>
    <property type="project" value="UniProtKB-SubCell"/>
</dbReference>
<dbReference type="GO" id="GO:0009368">
    <property type="term" value="C:endopeptidase Clp complex"/>
    <property type="evidence" value="ECO:0000318"/>
    <property type="project" value="GO_Central"/>
</dbReference>
<dbReference type="GO" id="GO:0004176">
    <property type="term" value="F:ATP-dependent peptidase activity"/>
    <property type="evidence" value="ECO:0000318"/>
    <property type="project" value="GO_Central"/>
</dbReference>
<dbReference type="GO" id="GO:0051117">
    <property type="term" value="F:ATPase binding"/>
    <property type="evidence" value="ECO:0000318"/>
    <property type="project" value="GO_Central"/>
</dbReference>
<dbReference type="GO" id="GO:0004252">
    <property type="term" value="F:serine-type endopeptidase activity"/>
    <property type="evidence" value="ECO:0000318"/>
    <property type="project" value="GO_Central"/>
</dbReference>
<dbReference type="GO" id="GO:0006515">
    <property type="term" value="P:protein quality control for misfolded or incompletely synthesized proteins"/>
    <property type="evidence" value="ECO:0000318"/>
    <property type="project" value="GO_Central"/>
</dbReference>
<dbReference type="CDD" id="cd07017">
    <property type="entry name" value="S14_ClpP_2"/>
    <property type="match status" value="1"/>
</dbReference>
<dbReference type="FunFam" id="3.90.226.10:FF:000002">
    <property type="entry name" value="ATP-dependent Clp protease proteolytic subunit"/>
    <property type="match status" value="1"/>
</dbReference>
<dbReference type="Gene3D" id="3.90.226.10">
    <property type="entry name" value="2-enoyl-CoA Hydratase, Chain A, domain 1"/>
    <property type="match status" value="1"/>
</dbReference>
<dbReference type="HAMAP" id="MF_00444">
    <property type="entry name" value="ClpP"/>
    <property type="match status" value="1"/>
</dbReference>
<dbReference type="InterPro" id="IPR001907">
    <property type="entry name" value="ClpP"/>
</dbReference>
<dbReference type="InterPro" id="IPR029045">
    <property type="entry name" value="ClpP/crotonase-like_dom_sf"/>
</dbReference>
<dbReference type="InterPro" id="IPR023562">
    <property type="entry name" value="ClpP/TepA"/>
</dbReference>
<dbReference type="InterPro" id="IPR033135">
    <property type="entry name" value="ClpP_His_AS"/>
</dbReference>
<dbReference type="NCBIfam" id="NF001368">
    <property type="entry name" value="PRK00277.1"/>
    <property type="match status" value="1"/>
</dbReference>
<dbReference type="NCBIfam" id="NF009205">
    <property type="entry name" value="PRK12553.1"/>
    <property type="match status" value="1"/>
</dbReference>
<dbReference type="NCBIfam" id="NF011091">
    <property type="entry name" value="PRK14514.1"/>
    <property type="match status" value="1"/>
</dbReference>
<dbReference type="PANTHER" id="PTHR10381">
    <property type="entry name" value="ATP-DEPENDENT CLP PROTEASE PROTEOLYTIC SUBUNIT"/>
    <property type="match status" value="1"/>
</dbReference>
<dbReference type="PANTHER" id="PTHR10381:SF70">
    <property type="entry name" value="ATP-DEPENDENT CLP PROTEASE PROTEOLYTIC SUBUNIT"/>
    <property type="match status" value="1"/>
</dbReference>
<dbReference type="Pfam" id="PF00574">
    <property type="entry name" value="CLP_protease"/>
    <property type="match status" value="1"/>
</dbReference>
<dbReference type="PRINTS" id="PR00127">
    <property type="entry name" value="CLPPROTEASEP"/>
</dbReference>
<dbReference type="SUPFAM" id="SSF52096">
    <property type="entry name" value="ClpP/crotonase"/>
    <property type="match status" value="1"/>
</dbReference>
<dbReference type="PROSITE" id="PS00382">
    <property type="entry name" value="CLP_PROTEASE_HIS"/>
    <property type="match status" value="1"/>
</dbReference>
<protein>
    <recommendedName>
        <fullName evidence="1">ATP-dependent Clp protease proteolytic subunit</fullName>
        <ecNumber evidence="1">3.4.21.92</ecNumber>
    </recommendedName>
    <alternativeName>
        <fullName evidence="1">Endopeptidase Clp</fullName>
    </alternativeName>
</protein>
<name>CLPP_BACTN</name>
<accession>Q8A129</accession>